<gene>
    <name type="primary">Lrrc24</name>
</gene>
<evidence type="ECO:0000255" key="1"/>
<evidence type="ECO:0000255" key="2">
    <source>
        <dbReference type="PROSITE-ProRule" id="PRU00114"/>
    </source>
</evidence>
<evidence type="ECO:0000256" key="3">
    <source>
        <dbReference type="SAM" id="MobiDB-lite"/>
    </source>
</evidence>
<evidence type="ECO:0000305" key="4"/>
<sequence length="521" mass="56334">MALRAPTLLLLLLGLLLLPLLPGLPPRATGCPAACRCYSATVECGALRLRVVPPGIPPGTQTLFLQDNSIAHLEQGSLAPLAALRHLYLHNNTLRALESGAFRAQPRLLELALTGNRLRGLRGGAFVGLVQLRVLYLAGNQLAKLLDFTFLHLPRLQELHLQENSIELLEDQALAGLSSLALLDLSRNQLGTISKEALQPLSSLQVLRLTENPWRCDCALHWLGSWIKEGGRRLLSSRDKKITCAEPPRLALQSLLEVSGGSLICIPPSVNVEPPEFTANLGEDLQVACQASGYPQPLVVWRKVPQPRDGKPQAQAQLEGGAPGLGGHGTRDTGSGMLFLTNITLAHAGKYECEAANAGGKARVPFHLLVNASRQQSQQLPDPQAPATRPVGHEPQHEAGSMAFRALGLATQTAITAAIALLALTALLLAAMICRRRRRRKKVPAPSGEGTLFVNDYSDGPCTFAQLEELRDDHGHEMFVIDRSKPLFPEVLPEEAPEHNPPDGLKSGLRLPTRVAYEIHC</sequence>
<reference key="1">
    <citation type="journal article" date="2005" name="Science">
        <title>The transcriptional landscape of the mammalian genome.</title>
        <authorList>
            <person name="Carninci P."/>
            <person name="Kasukawa T."/>
            <person name="Katayama S."/>
            <person name="Gough J."/>
            <person name="Frith M.C."/>
            <person name="Maeda N."/>
            <person name="Oyama R."/>
            <person name="Ravasi T."/>
            <person name="Lenhard B."/>
            <person name="Wells C."/>
            <person name="Kodzius R."/>
            <person name="Shimokawa K."/>
            <person name="Bajic V.B."/>
            <person name="Brenner S.E."/>
            <person name="Batalov S."/>
            <person name="Forrest A.R."/>
            <person name="Zavolan M."/>
            <person name="Davis M.J."/>
            <person name="Wilming L.G."/>
            <person name="Aidinis V."/>
            <person name="Allen J.E."/>
            <person name="Ambesi-Impiombato A."/>
            <person name="Apweiler R."/>
            <person name="Aturaliya R.N."/>
            <person name="Bailey T.L."/>
            <person name="Bansal M."/>
            <person name="Baxter L."/>
            <person name="Beisel K.W."/>
            <person name="Bersano T."/>
            <person name="Bono H."/>
            <person name="Chalk A.M."/>
            <person name="Chiu K.P."/>
            <person name="Choudhary V."/>
            <person name="Christoffels A."/>
            <person name="Clutterbuck D.R."/>
            <person name="Crowe M.L."/>
            <person name="Dalla E."/>
            <person name="Dalrymple B.P."/>
            <person name="de Bono B."/>
            <person name="Della Gatta G."/>
            <person name="di Bernardo D."/>
            <person name="Down T."/>
            <person name="Engstrom P."/>
            <person name="Fagiolini M."/>
            <person name="Faulkner G."/>
            <person name="Fletcher C.F."/>
            <person name="Fukushima T."/>
            <person name="Furuno M."/>
            <person name="Futaki S."/>
            <person name="Gariboldi M."/>
            <person name="Georgii-Hemming P."/>
            <person name="Gingeras T.R."/>
            <person name="Gojobori T."/>
            <person name="Green R.E."/>
            <person name="Gustincich S."/>
            <person name="Harbers M."/>
            <person name="Hayashi Y."/>
            <person name="Hensch T.K."/>
            <person name="Hirokawa N."/>
            <person name="Hill D."/>
            <person name="Huminiecki L."/>
            <person name="Iacono M."/>
            <person name="Ikeo K."/>
            <person name="Iwama A."/>
            <person name="Ishikawa T."/>
            <person name="Jakt M."/>
            <person name="Kanapin A."/>
            <person name="Katoh M."/>
            <person name="Kawasawa Y."/>
            <person name="Kelso J."/>
            <person name="Kitamura H."/>
            <person name="Kitano H."/>
            <person name="Kollias G."/>
            <person name="Krishnan S.P."/>
            <person name="Kruger A."/>
            <person name="Kummerfeld S.K."/>
            <person name="Kurochkin I.V."/>
            <person name="Lareau L.F."/>
            <person name="Lazarevic D."/>
            <person name="Lipovich L."/>
            <person name="Liu J."/>
            <person name="Liuni S."/>
            <person name="McWilliam S."/>
            <person name="Madan Babu M."/>
            <person name="Madera M."/>
            <person name="Marchionni L."/>
            <person name="Matsuda H."/>
            <person name="Matsuzawa S."/>
            <person name="Miki H."/>
            <person name="Mignone F."/>
            <person name="Miyake S."/>
            <person name="Morris K."/>
            <person name="Mottagui-Tabar S."/>
            <person name="Mulder N."/>
            <person name="Nakano N."/>
            <person name="Nakauchi H."/>
            <person name="Ng P."/>
            <person name="Nilsson R."/>
            <person name="Nishiguchi S."/>
            <person name="Nishikawa S."/>
            <person name="Nori F."/>
            <person name="Ohara O."/>
            <person name="Okazaki Y."/>
            <person name="Orlando V."/>
            <person name="Pang K.C."/>
            <person name="Pavan W.J."/>
            <person name="Pavesi G."/>
            <person name="Pesole G."/>
            <person name="Petrovsky N."/>
            <person name="Piazza S."/>
            <person name="Reed J."/>
            <person name="Reid J.F."/>
            <person name="Ring B.Z."/>
            <person name="Ringwald M."/>
            <person name="Rost B."/>
            <person name="Ruan Y."/>
            <person name="Salzberg S.L."/>
            <person name="Sandelin A."/>
            <person name="Schneider C."/>
            <person name="Schoenbach C."/>
            <person name="Sekiguchi K."/>
            <person name="Semple C.A."/>
            <person name="Seno S."/>
            <person name="Sessa L."/>
            <person name="Sheng Y."/>
            <person name="Shibata Y."/>
            <person name="Shimada H."/>
            <person name="Shimada K."/>
            <person name="Silva D."/>
            <person name="Sinclair B."/>
            <person name="Sperling S."/>
            <person name="Stupka E."/>
            <person name="Sugiura K."/>
            <person name="Sultana R."/>
            <person name="Takenaka Y."/>
            <person name="Taki K."/>
            <person name="Tammoja K."/>
            <person name="Tan S.L."/>
            <person name="Tang S."/>
            <person name="Taylor M.S."/>
            <person name="Tegner J."/>
            <person name="Teichmann S.A."/>
            <person name="Ueda H.R."/>
            <person name="van Nimwegen E."/>
            <person name="Verardo R."/>
            <person name="Wei C.L."/>
            <person name="Yagi K."/>
            <person name="Yamanishi H."/>
            <person name="Zabarovsky E."/>
            <person name="Zhu S."/>
            <person name="Zimmer A."/>
            <person name="Hide W."/>
            <person name="Bult C."/>
            <person name="Grimmond S.M."/>
            <person name="Teasdale R.D."/>
            <person name="Liu E.T."/>
            <person name="Brusic V."/>
            <person name="Quackenbush J."/>
            <person name="Wahlestedt C."/>
            <person name="Mattick J.S."/>
            <person name="Hume D.A."/>
            <person name="Kai C."/>
            <person name="Sasaki D."/>
            <person name="Tomaru Y."/>
            <person name="Fukuda S."/>
            <person name="Kanamori-Katayama M."/>
            <person name="Suzuki M."/>
            <person name="Aoki J."/>
            <person name="Arakawa T."/>
            <person name="Iida J."/>
            <person name="Imamura K."/>
            <person name="Itoh M."/>
            <person name="Kato T."/>
            <person name="Kawaji H."/>
            <person name="Kawagashira N."/>
            <person name="Kawashima T."/>
            <person name="Kojima M."/>
            <person name="Kondo S."/>
            <person name="Konno H."/>
            <person name="Nakano K."/>
            <person name="Ninomiya N."/>
            <person name="Nishio T."/>
            <person name="Okada M."/>
            <person name="Plessy C."/>
            <person name="Shibata K."/>
            <person name="Shiraki T."/>
            <person name="Suzuki S."/>
            <person name="Tagami M."/>
            <person name="Waki K."/>
            <person name="Watahiki A."/>
            <person name="Okamura-Oho Y."/>
            <person name="Suzuki H."/>
            <person name="Kawai J."/>
            <person name="Hayashizaki Y."/>
        </authorList>
    </citation>
    <scope>NUCLEOTIDE SEQUENCE [LARGE SCALE MRNA]</scope>
    <source>
        <strain>C57BL/6J</strain>
        <tissue>Cerebellum</tissue>
        <tissue>Olfactory bulb</tissue>
    </source>
</reference>
<reference key="2">
    <citation type="journal article" date="2004" name="Genome Res.">
        <title>The status, quality, and expansion of the NIH full-length cDNA project: the Mammalian Gene Collection (MGC).</title>
        <authorList>
            <consortium name="The MGC Project Team"/>
        </authorList>
    </citation>
    <scope>NUCLEOTIDE SEQUENCE [LARGE SCALE MRNA]</scope>
    <source>
        <tissue>Brain</tissue>
    </source>
</reference>
<name>LRC24_MOUSE</name>
<organism>
    <name type="scientific">Mus musculus</name>
    <name type="common">Mouse</name>
    <dbReference type="NCBI Taxonomy" id="10090"/>
    <lineage>
        <taxon>Eukaryota</taxon>
        <taxon>Metazoa</taxon>
        <taxon>Chordata</taxon>
        <taxon>Craniata</taxon>
        <taxon>Vertebrata</taxon>
        <taxon>Euteleostomi</taxon>
        <taxon>Mammalia</taxon>
        <taxon>Eutheria</taxon>
        <taxon>Euarchontoglires</taxon>
        <taxon>Glires</taxon>
        <taxon>Rodentia</taxon>
        <taxon>Myomorpha</taxon>
        <taxon>Muroidea</taxon>
        <taxon>Muridae</taxon>
        <taxon>Murinae</taxon>
        <taxon>Mus</taxon>
        <taxon>Mus</taxon>
    </lineage>
</organism>
<feature type="signal peptide" evidence="1">
    <location>
        <begin position="1"/>
        <end position="23"/>
    </location>
</feature>
<feature type="chain" id="PRO_0000231597" description="Leucine-rich repeat-containing protein 24">
    <location>
        <begin position="24"/>
        <end position="521"/>
    </location>
</feature>
<feature type="transmembrane region" description="Helical" evidence="1">
    <location>
        <begin position="414"/>
        <end position="434"/>
    </location>
</feature>
<feature type="domain" description="LRRNT">
    <location>
        <begin position="24"/>
        <end position="58"/>
    </location>
</feature>
<feature type="repeat" description="LRR 1">
    <location>
        <begin position="59"/>
        <end position="80"/>
    </location>
</feature>
<feature type="repeat" description="LRR 2">
    <location>
        <begin position="83"/>
        <end position="104"/>
    </location>
</feature>
<feature type="repeat" description="LRR 3">
    <location>
        <begin position="107"/>
        <end position="128"/>
    </location>
</feature>
<feature type="repeat" description="LRR 4">
    <location>
        <begin position="131"/>
        <end position="152"/>
    </location>
</feature>
<feature type="repeat" description="LRR 5">
    <location>
        <begin position="155"/>
        <end position="176"/>
    </location>
</feature>
<feature type="repeat" description="LRR 6">
    <location>
        <begin position="179"/>
        <end position="200"/>
    </location>
</feature>
<feature type="domain" description="LRRCT">
    <location>
        <begin position="212"/>
        <end position="267"/>
    </location>
</feature>
<feature type="domain" description="Ig-like C2-type">
    <location>
        <begin position="268"/>
        <end position="371"/>
    </location>
</feature>
<feature type="region of interest" description="Disordered" evidence="3">
    <location>
        <begin position="306"/>
        <end position="330"/>
    </location>
</feature>
<feature type="region of interest" description="Disordered" evidence="3">
    <location>
        <begin position="374"/>
        <end position="395"/>
    </location>
</feature>
<feature type="glycosylation site" description="N-linked (GlcNAc...) asparagine" evidence="1">
    <location>
        <position position="91"/>
    </location>
</feature>
<feature type="glycosylation site" description="N-linked (GlcNAc...) asparagine" evidence="1">
    <location>
        <position position="342"/>
    </location>
</feature>
<feature type="glycosylation site" description="N-linked (GlcNAc...) asparagine" evidence="1">
    <location>
        <position position="371"/>
    </location>
</feature>
<feature type="disulfide bond" evidence="2">
    <location>
        <begin position="289"/>
        <end position="353"/>
    </location>
</feature>
<accession>Q8BHA1</accession>
<accession>Q14AD4</accession>
<keyword id="KW-1015">Disulfide bond</keyword>
<keyword id="KW-0325">Glycoprotein</keyword>
<keyword id="KW-0393">Immunoglobulin domain</keyword>
<keyword id="KW-0433">Leucine-rich repeat</keyword>
<keyword id="KW-0472">Membrane</keyword>
<keyword id="KW-1185">Reference proteome</keyword>
<keyword id="KW-0677">Repeat</keyword>
<keyword id="KW-0732">Signal</keyword>
<keyword id="KW-0812">Transmembrane</keyword>
<keyword id="KW-1133">Transmembrane helix</keyword>
<dbReference type="EMBL" id="AK048678">
    <property type="protein sequence ID" value="BAC33419.1"/>
    <property type="molecule type" value="mRNA"/>
</dbReference>
<dbReference type="EMBL" id="AK078176">
    <property type="protein sequence ID" value="BAC37163.1"/>
    <property type="molecule type" value="mRNA"/>
</dbReference>
<dbReference type="EMBL" id="BC116884">
    <property type="protein sequence ID" value="AAI16885.1"/>
    <property type="molecule type" value="mRNA"/>
</dbReference>
<dbReference type="EMBL" id="BC116886">
    <property type="protein sequence ID" value="AAI16887.1"/>
    <property type="molecule type" value="mRNA"/>
</dbReference>
<dbReference type="CCDS" id="CCDS27590.1"/>
<dbReference type="RefSeq" id="NP_932787.1">
    <property type="nucleotide sequence ID" value="NM_198119.2"/>
</dbReference>
<dbReference type="SMR" id="Q8BHA1"/>
<dbReference type="BioGRID" id="237562">
    <property type="interactions" value="1"/>
</dbReference>
<dbReference type="FunCoup" id="Q8BHA1">
    <property type="interactions" value="150"/>
</dbReference>
<dbReference type="IntAct" id="Q8BHA1">
    <property type="interactions" value="1"/>
</dbReference>
<dbReference type="STRING" id="10090.ENSMUSP00000061906"/>
<dbReference type="GlyConnect" id="2468">
    <property type="glycosylation" value="1 N-Linked glycan (1 site)"/>
</dbReference>
<dbReference type="GlyCosmos" id="Q8BHA1">
    <property type="glycosylation" value="3 sites, 1 glycan"/>
</dbReference>
<dbReference type="GlyGen" id="Q8BHA1">
    <property type="glycosylation" value="3 sites, 3 N-linked glycans (3 sites)"/>
</dbReference>
<dbReference type="iPTMnet" id="Q8BHA1"/>
<dbReference type="PhosphoSitePlus" id="Q8BHA1"/>
<dbReference type="PaxDb" id="10090-ENSMUSP00000061906"/>
<dbReference type="ProteomicsDB" id="287263"/>
<dbReference type="Antibodypedia" id="49490">
    <property type="antibodies" value="49 antibodies from 14 providers"/>
</dbReference>
<dbReference type="DNASU" id="378937"/>
<dbReference type="Ensembl" id="ENSMUST00000049956.5">
    <property type="protein sequence ID" value="ENSMUSP00000061906.5"/>
    <property type="gene ID" value="ENSMUSG00000033707.10"/>
</dbReference>
<dbReference type="GeneID" id="378937"/>
<dbReference type="KEGG" id="mmu:378937"/>
<dbReference type="UCSC" id="uc007wme.1">
    <property type="organism name" value="mouse"/>
</dbReference>
<dbReference type="AGR" id="MGI:3605040"/>
<dbReference type="CTD" id="441381"/>
<dbReference type="MGI" id="MGI:3605040">
    <property type="gene designation" value="Lrrc24"/>
</dbReference>
<dbReference type="VEuPathDB" id="HostDB:ENSMUSG00000033707"/>
<dbReference type="eggNOG" id="KOG0619">
    <property type="taxonomic scope" value="Eukaryota"/>
</dbReference>
<dbReference type="GeneTree" id="ENSGT00940000160141"/>
<dbReference type="HOGENOM" id="CLU_000288_18_24_1"/>
<dbReference type="InParanoid" id="Q8BHA1"/>
<dbReference type="OMA" id="AAYEIHC"/>
<dbReference type="OrthoDB" id="8400687at2759"/>
<dbReference type="PhylomeDB" id="Q8BHA1"/>
<dbReference type="TreeFam" id="TF320455"/>
<dbReference type="BioGRID-ORCS" id="378937">
    <property type="hits" value="4 hits in 77 CRISPR screens"/>
</dbReference>
<dbReference type="PRO" id="PR:Q8BHA1"/>
<dbReference type="Proteomes" id="UP000000589">
    <property type="component" value="Chromosome 15"/>
</dbReference>
<dbReference type="RNAct" id="Q8BHA1">
    <property type="molecule type" value="protein"/>
</dbReference>
<dbReference type="Bgee" id="ENSMUSG00000033707">
    <property type="expression patterns" value="Expressed in superior frontal gyrus and 89 other cell types or tissues"/>
</dbReference>
<dbReference type="GO" id="GO:0016020">
    <property type="term" value="C:membrane"/>
    <property type="evidence" value="ECO:0007669"/>
    <property type="project" value="UniProtKB-SubCell"/>
</dbReference>
<dbReference type="GO" id="GO:0051965">
    <property type="term" value="P:positive regulation of synapse assembly"/>
    <property type="evidence" value="ECO:0000314"/>
    <property type="project" value="MGI"/>
</dbReference>
<dbReference type="FunFam" id="2.60.40.10:FF:001325">
    <property type="entry name" value="Leucine rich repeat containing 24"/>
    <property type="match status" value="1"/>
</dbReference>
<dbReference type="FunFam" id="3.80.10.10:FF:000082">
    <property type="entry name" value="Leucine-rich repeat-containing 24"/>
    <property type="match status" value="1"/>
</dbReference>
<dbReference type="FunFam" id="3.80.10.10:FF:000184">
    <property type="entry name" value="leucine-rich repeat-containing protein 24"/>
    <property type="match status" value="1"/>
</dbReference>
<dbReference type="Gene3D" id="2.60.40.10">
    <property type="entry name" value="Immunoglobulins"/>
    <property type="match status" value="1"/>
</dbReference>
<dbReference type="Gene3D" id="3.80.10.10">
    <property type="entry name" value="Ribonuclease Inhibitor"/>
    <property type="match status" value="2"/>
</dbReference>
<dbReference type="InterPro" id="IPR000483">
    <property type="entry name" value="Cys-rich_flank_reg_C"/>
</dbReference>
<dbReference type="InterPro" id="IPR007110">
    <property type="entry name" value="Ig-like_dom"/>
</dbReference>
<dbReference type="InterPro" id="IPR036179">
    <property type="entry name" value="Ig-like_dom_sf"/>
</dbReference>
<dbReference type="InterPro" id="IPR013783">
    <property type="entry name" value="Ig-like_fold"/>
</dbReference>
<dbReference type="InterPro" id="IPR003599">
    <property type="entry name" value="Ig_sub"/>
</dbReference>
<dbReference type="InterPro" id="IPR003598">
    <property type="entry name" value="Ig_sub2"/>
</dbReference>
<dbReference type="InterPro" id="IPR001611">
    <property type="entry name" value="Leu-rich_rpt"/>
</dbReference>
<dbReference type="InterPro" id="IPR003591">
    <property type="entry name" value="Leu-rich_rpt_typical-subtyp"/>
</dbReference>
<dbReference type="InterPro" id="IPR032675">
    <property type="entry name" value="LRR_dom_sf"/>
</dbReference>
<dbReference type="PANTHER" id="PTHR24366">
    <property type="entry name" value="IG(IMMUNOGLOBULIN) AND LRR(LEUCINE RICH REPEAT) DOMAINS"/>
    <property type="match status" value="1"/>
</dbReference>
<dbReference type="PANTHER" id="PTHR24366:SF129">
    <property type="entry name" value="LEUCINE RICH REPEAT CONTAINING 24"/>
    <property type="match status" value="1"/>
</dbReference>
<dbReference type="Pfam" id="PF13927">
    <property type="entry name" value="Ig_3"/>
    <property type="match status" value="1"/>
</dbReference>
<dbReference type="Pfam" id="PF13855">
    <property type="entry name" value="LRR_8"/>
    <property type="match status" value="2"/>
</dbReference>
<dbReference type="SMART" id="SM00409">
    <property type="entry name" value="IG"/>
    <property type="match status" value="1"/>
</dbReference>
<dbReference type="SMART" id="SM00408">
    <property type="entry name" value="IGc2"/>
    <property type="match status" value="1"/>
</dbReference>
<dbReference type="SMART" id="SM00369">
    <property type="entry name" value="LRR_TYP"/>
    <property type="match status" value="6"/>
</dbReference>
<dbReference type="SMART" id="SM00082">
    <property type="entry name" value="LRRCT"/>
    <property type="match status" value="1"/>
</dbReference>
<dbReference type="SUPFAM" id="SSF48726">
    <property type="entry name" value="Immunoglobulin"/>
    <property type="match status" value="1"/>
</dbReference>
<dbReference type="SUPFAM" id="SSF52058">
    <property type="entry name" value="L domain-like"/>
    <property type="match status" value="1"/>
</dbReference>
<dbReference type="PROSITE" id="PS50835">
    <property type="entry name" value="IG_LIKE"/>
    <property type="match status" value="1"/>
</dbReference>
<dbReference type="PROSITE" id="PS51450">
    <property type="entry name" value="LRR"/>
    <property type="match status" value="6"/>
</dbReference>
<comment type="subcellular location">
    <subcellularLocation>
        <location evidence="4">Membrane</location>
        <topology evidence="4">Single-pass membrane protein</topology>
    </subcellularLocation>
</comment>
<proteinExistence type="evidence at transcript level"/>
<protein>
    <recommendedName>
        <fullName>Leucine-rich repeat-containing protein 24</fullName>
    </recommendedName>
</protein>